<protein>
    <recommendedName>
        <fullName evidence="1">Ribosome-binding factor A</fullName>
    </recommendedName>
</protein>
<keyword id="KW-0963">Cytoplasm</keyword>
<keyword id="KW-0690">Ribosome biogenesis</keyword>
<sequence>MAKEFSRSQRVSQEMQKEIALILQREIKDPRVGMATVSGIELSRDLAYAKVFVTFLNVLTDNADPDTVKNGIKALQDASGYIRTLLGKAMRLRIVPELTFAYDNSLIEGMRMSNLVSNVIKNDVERQVNPGSDEEK</sequence>
<dbReference type="EMBL" id="CP000668">
    <property type="protein sequence ID" value="ABP41894.1"/>
    <property type="molecule type" value="Genomic_DNA"/>
</dbReference>
<dbReference type="RefSeq" id="WP_002209255.1">
    <property type="nucleotide sequence ID" value="NZ_CP009715.1"/>
</dbReference>
<dbReference type="SMR" id="A4TRI2"/>
<dbReference type="GeneID" id="96663988"/>
<dbReference type="KEGG" id="ypp:YPDSF_3544"/>
<dbReference type="PATRIC" id="fig|386656.14.peg.200"/>
<dbReference type="GO" id="GO:0005829">
    <property type="term" value="C:cytosol"/>
    <property type="evidence" value="ECO:0007669"/>
    <property type="project" value="TreeGrafter"/>
</dbReference>
<dbReference type="GO" id="GO:0043024">
    <property type="term" value="F:ribosomal small subunit binding"/>
    <property type="evidence" value="ECO:0007669"/>
    <property type="project" value="TreeGrafter"/>
</dbReference>
<dbReference type="GO" id="GO:0030490">
    <property type="term" value="P:maturation of SSU-rRNA"/>
    <property type="evidence" value="ECO:0007669"/>
    <property type="project" value="UniProtKB-UniRule"/>
</dbReference>
<dbReference type="FunFam" id="3.30.300.20:FF:000007">
    <property type="entry name" value="Ribosome-binding factor A"/>
    <property type="match status" value="1"/>
</dbReference>
<dbReference type="Gene3D" id="3.30.300.20">
    <property type="match status" value="1"/>
</dbReference>
<dbReference type="HAMAP" id="MF_00003">
    <property type="entry name" value="RbfA"/>
    <property type="match status" value="1"/>
</dbReference>
<dbReference type="InterPro" id="IPR015946">
    <property type="entry name" value="KH_dom-like_a/b"/>
</dbReference>
<dbReference type="InterPro" id="IPR000238">
    <property type="entry name" value="RbfA"/>
</dbReference>
<dbReference type="InterPro" id="IPR023799">
    <property type="entry name" value="RbfA_dom_sf"/>
</dbReference>
<dbReference type="InterPro" id="IPR020053">
    <property type="entry name" value="Ribosome-bd_factorA_CS"/>
</dbReference>
<dbReference type="NCBIfam" id="TIGR00082">
    <property type="entry name" value="rbfA"/>
    <property type="match status" value="1"/>
</dbReference>
<dbReference type="PANTHER" id="PTHR33515">
    <property type="entry name" value="RIBOSOME-BINDING FACTOR A, CHLOROPLASTIC-RELATED"/>
    <property type="match status" value="1"/>
</dbReference>
<dbReference type="PANTHER" id="PTHR33515:SF1">
    <property type="entry name" value="RIBOSOME-BINDING FACTOR A, CHLOROPLASTIC-RELATED"/>
    <property type="match status" value="1"/>
</dbReference>
<dbReference type="Pfam" id="PF02033">
    <property type="entry name" value="RBFA"/>
    <property type="match status" value="1"/>
</dbReference>
<dbReference type="SUPFAM" id="SSF89919">
    <property type="entry name" value="Ribosome-binding factor A, RbfA"/>
    <property type="match status" value="1"/>
</dbReference>
<dbReference type="PROSITE" id="PS01319">
    <property type="entry name" value="RBFA"/>
    <property type="match status" value="1"/>
</dbReference>
<feature type="chain" id="PRO_1000000250" description="Ribosome-binding factor A">
    <location>
        <begin position="1"/>
        <end position="136"/>
    </location>
</feature>
<name>RBFA_YERPP</name>
<gene>
    <name evidence="1" type="primary">rbfA</name>
    <name type="ordered locus">YPDSF_3544</name>
</gene>
<comment type="function">
    <text evidence="1">One of several proteins that assist in the late maturation steps of the functional core of the 30S ribosomal subunit. Associates with free 30S ribosomal subunits (but not with 30S subunits that are part of 70S ribosomes or polysomes). Required for efficient processing of 16S rRNA. May interact with the 5'-terminal helix region of 16S rRNA.</text>
</comment>
<comment type="subunit">
    <text evidence="1">Monomer. Binds 30S ribosomal subunits, but not 50S ribosomal subunits or 70S ribosomes.</text>
</comment>
<comment type="subcellular location">
    <subcellularLocation>
        <location evidence="1">Cytoplasm</location>
    </subcellularLocation>
</comment>
<comment type="similarity">
    <text evidence="1">Belongs to the RbfA family.</text>
</comment>
<proteinExistence type="inferred from homology"/>
<reference key="1">
    <citation type="submission" date="2007-02" db="EMBL/GenBank/DDBJ databases">
        <title>Complete sequence of chromosome of Yersinia pestis Pestoides F.</title>
        <authorList>
            <consortium name="US DOE Joint Genome Institute"/>
            <person name="Copeland A."/>
            <person name="Lucas S."/>
            <person name="Lapidus A."/>
            <person name="Barry K."/>
            <person name="Detter J.C."/>
            <person name="Glavina del Rio T."/>
            <person name="Hammon N."/>
            <person name="Israni S."/>
            <person name="Dalin E."/>
            <person name="Tice H."/>
            <person name="Pitluck S."/>
            <person name="Di Bartolo G."/>
            <person name="Chain P."/>
            <person name="Malfatti S."/>
            <person name="Shin M."/>
            <person name="Vergez L."/>
            <person name="Schmutz J."/>
            <person name="Larimer F."/>
            <person name="Land M."/>
            <person name="Hauser L."/>
            <person name="Worsham P."/>
            <person name="Chu M."/>
            <person name="Bearden S."/>
            <person name="Garcia E."/>
            <person name="Richardson P."/>
        </authorList>
    </citation>
    <scope>NUCLEOTIDE SEQUENCE [LARGE SCALE GENOMIC DNA]</scope>
    <source>
        <strain>Pestoides F</strain>
    </source>
</reference>
<evidence type="ECO:0000255" key="1">
    <source>
        <dbReference type="HAMAP-Rule" id="MF_00003"/>
    </source>
</evidence>
<organism>
    <name type="scientific">Yersinia pestis (strain Pestoides F)</name>
    <dbReference type="NCBI Taxonomy" id="386656"/>
    <lineage>
        <taxon>Bacteria</taxon>
        <taxon>Pseudomonadati</taxon>
        <taxon>Pseudomonadota</taxon>
        <taxon>Gammaproteobacteria</taxon>
        <taxon>Enterobacterales</taxon>
        <taxon>Yersiniaceae</taxon>
        <taxon>Yersinia</taxon>
    </lineage>
</organism>
<accession>A4TRI2</accession>